<proteinExistence type="evidence at protein level"/>
<feature type="chain" id="PRO_0000442042" description="Cytochrome P450 monooygenase 1">
    <location>
        <begin position="1"/>
        <end position="440"/>
    </location>
</feature>
<feature type="binding site" description="axial binding residue" evidence="1">
    <location>
        <position position="381"/>
    </location>
    <ligand>
        <name>heme</name>
        <dbReference type="ChEBI" id="CHEBI:30413"/>
    </ligand>
    <ligandPart>
        <name>Fe</name>
        <dbReference type="ChEBI" id="CHEBI:18248"/>
    </ligandPart>
</feature>
<organism>
    <name type="scientific">Gibberella fujikuroi (strain CBS 195.34 / IMI 58289 / NRRL A-6831)</name>
    <name type="common">Bakanae and foot rot disease fungus</name>
    <name type="synonym">Fusarium fujikuroi</name>
    <dbReference type="NCBI Taxonomy" id="1279085"/>
    <lineage>
        <taxon>Eukaryota</taxon>
        <taxon>Fungi</taxon>
        <taxon>Dikarya</taxon>
        <taxon>Ascomycota</taxon>
        <taxon>Pezizomycotina</taxon>
        <taxon>Sordariomycetes</taxon>
        <taxon>Hypocreomycetidae</taxon>
        <taxon>Hypocreales</taxon>
        <taxon>Nectriaceae</taxon>
        <taxon>Fusarium</taxon>
        <taxon>Fusarium fujikuroi species complex</taxon>
    </lineage>
</organism>
<evidence type="ECO:0000250" key="1">
    <source>
        <dbReference type="UniProtKB" id="P04798"/>
    </source>
</evidence>
<evidence type="ECO:0000269" key="2">
    <source>
    </source>
</evidence>
<evidence type="ECO:0000269" key="3">
    <source>
    </source>
</evidence>
<evidence type="ECO:0000269" key="4">
    <source>
    </source>
</evidence>
<evidence type="ECO:0000269" key="5">
    <source>
    </source>
</evidence>
<evidence type="ECO:0000269" key="6">
    <source>
    </source>
</evidence>
<evidence type="ECO:0000269" key="7">
    <source>
    </source>
</evidence>
<evidence type="ECO:0000269" key="8">
    <source>
    </source>
</evidence>
<evidence type="ECO:0000269" key="9">
    <source>
    </source>
</evidence>
<evidence type="ECO:0000269" key="10">
    <source>
    </source>
</evidence>
<evidence type="ECO:0000269" key="11">
    <source>
    </source>
</evidence>
<evidence type="ECO:0000303" key="12">
    <source>
    </source>
</evidence>
<evidence type="ECO:0000303" key="13">
    <source>
    </source>
</evidence>
<evidence type="ECO:0000305" key="14"/>
<gene>
    <name evidence="13" type="primary">P450-1</name>
    <name type="ORF">FFUJ_14333</name>
</gene>
<reference key="1">
    <citation type="journal article" date="2013" name="PLoS Pathog.">
        <title>Deciphering the cryptic genome: genome-wide analyses of the rice pathogen Fusarium fujikuroi reveal complex regulation of secondary metabolism and novel metabolites.</title>
        <authorList>
            <person name="Wiemann P."/>
            <person name="Sieber C.M.K."/>
            <person name="von Bargen K.W."/>
            <person name="Studt L."/>
            <person name="Niehaus E.-M."/>
            <person name="Espino J.J."/>
            <person name="Huss K."/>
            <person name="Michielse C.B."/>
            <person name="Albermann S."/>
            <person name="Wagner D."/>
            <person name="Bergner S.V."/>
            <person name="Connolly L.R."/>
            <person name="Fischer A."/>
            <person name="Reuter G."/>
            <person name="Kleigrewe K."/>
            <person name="Bald T."/>
            <person name="Wingfield B.D."/>
            <person name="Ophir R."/>
            <person name="Freeman S."/>
            <person name="Hippler M."/>
            <person name="Smith K.M."/>
            <person name="Brown D.W."/>
            <person name="Proctor R.H."/>
            <person name="Muensterkoetter M."/>
            <person name="Freitag M."/>
            <person name="Humpf H.-U."/>
            <person name="Gueldener U."/>
            <person name="Tudzynski B."/>
        </authorList>
    </citation>
    <scope>NUCLEOTIDE SEQUENCE [LARGE SCALE GENOMIC DNA]</scope>
    <scope>FUNCTION</scope>
    <source>
        <strain>CBS 195.34 / IMI 58289 / NRRL A-6831</strain>
    </source>
</reference>
<reference key="2">
    <citation type="journal article" date="1998" name="Curr. Genet.">
        <title>Gibberellin biosynthesis in Gibberella fujikuroi: cloning and characterization of the copalyl diphosphate synthase gene.</title>
        <authorList>
            <person name="Tudzynski B."/>
            <person name="Kawaide H."/>
            <person name="Kamiya Y."/>
        </authorList>
    </citation>
    <scope>FUNCTION</scope>
</reference>
<reference key="3">
    <citation type="journal article" date="1998" name="Fungal Genet. Biol.">
        <title>Gibberellin biosynthetic pathway in Gibberella fujikuroi: evidence for a gene cluster.</title>
        <authorList>
            <person name="Tudzynski B."/>
            <person name="Hoelter K."/>
        </authorList>
    </citation>
    <scope>FUNCTION</scope>
    <scope>INDUCTION</scope>
    <scope>DISRUPTION PHENOTYPE</scope>
    <scope>PATHWAY</scope>
</reference>
<reference key="4">
    <citation type="journal article" date="1999" name="Appl. Environ. Microbiol.">
        <title>Deletions in the gibberellin biosynthesis gene cluster of Gibberella fujikuroi by restriction enzyme-mediated integration and conventional transformation-mediated mutagenesis.</title>
        <authorList>
            <person name="Linnemannstoens P."/>
            <person name="Voss T."/>
            <person name="Hedden P."/>
            <person name="Gaskin P."/>
            <person name="Tudzynski B."/>
        </authorList>
    </citation>
    <scope>FUNCTION</scope>
</reference>
<reference key="5">
    <citation type="journal article" date="2000" name="Biosci. Biotechnol. Biochem.">
        <title>Cloning of a full-length cDNA encoding ent-kaurene synthase from Gibberella fujikuroi: functional analysis of a bifunctional diterpene cyclase.</title>
        <authorList>
            <person name="Toyomasu T."/>
            <person name="Kawaide H."/>
            <person name="Ishizaki A."/>
            <person name="Shinoda S."/>
            <person name="Otsuka M."/>
            <person name="Mitsuhashi W."/>
            <person name="Sassa T."/>
        </authorList>
    </citation>
    <scope>FUNCTION</scope>
</reference>
<reference key="6">
    <citation type="journal article" date="2001" name="Appl. Environ. Microbiol.">
        <title>The P450-4 gene of Gibberella fujikuroi encodes ent-kaurene oxidase in the gibberellin biosynthesis pathway.</title>
        <authorList>
            <person name="Tudzynski B."/>
            <person name="Hedden P."/>
            <person name="Carrera E."/>
            <person name="Gaskin P."/>
        </authorList>
    </citation>
    <scope>FUNCTION</scope>
</reference>
<reference key="7">
    <citation type="journal article" date="2001" name="Proc. Natl. Acad. Sci. U.S.A.">
        <title>The P450-1 gene of Gibberella fujikuroi encodes a multifunctional enzyme in gibberellin biosynthesis.</title>
        <authorList>
            <person name="Rojas M.C."/>
            <person name="Hedden P."/>
            <person name="Gaskin P."/>
            <person name="Tudzynski B."/>
        </authorList>
    </citation>
    <scope>FUNCTION</scope>
    <scope>DISRUPTION PHENOTYPE</scope>
    <scope>CATALYTIC ACTIVITY</scope>
    <scope>PATHWAY</scope>
</reference>
<reference key="8">
    <citation type="journal article" date="2002" name="J. Biol. Chem.">
        <title>The gibberellin 20-oxidase of Gibberella fujikuroi is a multifunctional monooxygenase.</title>
        <authorList>
            <person name="Tudzynski B."/>
            <person name="Rojas M.C."/>
            <person name="Gaskin P."/>
            <person name="Hedden P."/>
        </authorList>
    </citation>
    <scope>FUNCTION</scope>
</reference>
<reference key="9">
    <citation type="journal article" date="2003" name="J. Biol. Chem.">
        <title>Characterization of the final two genes of the gibberellin biosynthesis gene cluster of Gibberella fujikuroi: des and P450-3 encode GA4 desaturase and the 13-hydroxylase, respectively.</title>
        <authorList>
            <person name="Tudzynski B."/>
            <person name="Mihlan M."/>
            <person name="Rojas M.C."/>
            <person name="Linnemannstons P."/>
            <person name="Gaskin P."/>
            <person name="Hedden P."/>
        </authorList>
    </citation>
    <scope>FUNCTION</scope>
</reference>
<reference key="10">
    <citation type="journal article" date="2005" name="Phytochemistry">
        <title>Distribution of gibberellin biosynthetic genes and gibberellin production in the Gibberella fujikuroi species complex.</title>
        <authorList>
            <person name="Malonek S."/>
            <person name="Boemke C."/>
            <person name="Bornberg-Bauer E."/>
            <person name="Rojas M.C."/>
            <person name="Hedden P."/>
            <person name="Hopkins P."/>
            <person name="Tudzynski B."/>
        </authorList>
    </citation>
    <scope>FUNCTION</scope>
</reference>
<sequence length="440" mass="50576">MSPDKPFRIMGDVGELHILPPKYAYEVRNNEKLSFTMAAFKWFYAHLPGFEGFREGTNESHIMKLVARHQLTHQLTLVTGAVSEECALVLKDVYTDSPEWHDITAKDANMKLMARITSRVFLGKEMCRNPQWLRITSTYAVIAFRAVEELRLWPSWLRPVVQWFMPHCTQSRALVQEARDLINPLLERRREEKAEAERTGEKVTYNDAVEWLDDLAREKGVGYDPACAQLSLSVAALHSTTDFFTQVMFDIAQNPELIEPLREEIIAVLGKQGWSKNSLYNLKLMDSVLKESQRLKPIAIASMRRFTTHNVKLSDGVILPKNKLTLVSAHQHWDPEYYKDPLKFDGYRFFNMRREPGKESKAQLVSATPDHMGFGYGLHACPGRFFASEEIKIALSHILLKYDFKPVEGSSMEPRKYGLNMNANPTAKLSVRRRKEEIAI</sequence>
<comment type="function">
    <text evidence="2 3 4 5 6 7 8 9 10 11">GA14 synthase; part of the gene cluster that mediates the biosynthesis of gibberellins (GAs), diterpenoids that may provide a selective advantage during infection of the preferred host plant, rice (PubMed:10347043, PubMed:12750377, PubMed:15925394, PubMed:23825955, PubMed:9917370). Gibberellins (GAs) are diterpenoids and are synthesized via the mevalonate pathway (PubMed:12750377). Biosynthesis of the major metabolite GA3 (gibberellic acid) from geranylgeranyl diphosphate (GGPP) requires 13 steps (PubMed:12750377). The GGPP produced by the geranylgeranyl diphosphate synthase GGS2 is converted to ent-kaurene via ent-copalyldiphosphate in a two-step cyclization reaction performed by the bifunctional ent-copalyl diphosphate synthase/ent-kaurene synthase enzyme (CPS/KS) (PubMed:10803977, PubMed:12750377, PubMed:9745028). Ent-Kaurene is metabolized to GAs by a series of oxidation reactions catalyzed by cytochrome P450 monooxygenases (PubMed:12750377, PubMed:9917370). Cytochrome P450 monooxygenase P450-4 is an ent-kaurene oxidase that catalyzes the three oxidation steps between ent-kaurene and ent-kaurenoic acid (PubMed:11472927). The highly multifunctional cytochrome P450 monooxygenase P450-1 then catalyzes four steps involving oxidation at two carbon atoms, in the main pathway from ent-kaurenoic acid to GA14 via GA12-aldehyde as well as producing kaurenolides and fujenoic acids as by-products (PubMed:11320210). The cytochrome P450 monooxygenase P450-2 then converts GA14 to GA4 by removal of C-20 (PubMed:11943776). GA4 is further converted to GA7 by the GA4 desaturase DES via 1,2-desaturation before cytochrome P450 monooxygenase P450-3, a 13-hydroxylase, hydroxylates GA7 to GA3, the final product of the GA-biosynthetic pathway (PubMed:12750377).</text>
</comment>
<comment type="cofactor">
    <cofactor evidence="1">
        <name>heme</name>
        <dbReference type="ChEBI" id="CHEBI:30413"/>
    </cofactor>
</comment>
<comment type="pathway">
    <text evidence="4 11">Plant hormone biosynthesis; gibberellin biosynthesis.</text>
</comment>
<comment type="induction">
    <text evidence="11">Expression is induced under gibberellin-producing conditions (PubMed:9917370).</text>
</comment>
<comment type="disruption phenotype">
    <text evidence="4 11">Leads to the loss of gibberellins production accumulates ent-kaurenoic acid but not later intermediates (PubMed:11320210, PubMed:9917370).</text>
</comment>
<comment type="similarity">
    <text evidence="14">Belongs to the cytochrome P450 family.</text>
</comment>
<keyword id="KW-0349">Heme</keyword>
<keyword id="KW-0408">Iron</keyword>
<keyword id="KW-0479">Metal-binding</keyword>
<keyword id="KW-0503">Monooxygenase</keyword>
<keyword id="KW-0560">Oxidoreductase</keyword>
<keyword id="KW-1185">Reference proteome</keyword>
<dbReference type="EC" id="1.-.-.-" evidence="4"/>
<dbReference type="EMBL" id="HF679027">
    <property type="protein sequence ID" value="CCT69174.1"/>
    <property type="molecule type" value="Genomic_DNA"/>
</dbReference>
<dbReference type="SMR" id="S0E2U7"/>
<dbReference type="STRING" id="1279085.S0E2U7"/>
<dbReference type="EnsemblFungi" id="CCT69174">
    <property type="protein sequence ID" value="CCT69174"/>
    <property type="gene ID" value="FFUJ_14333"/>
</dbReference>
<dbReference type="VEuPathDB" id="FungiDB:FFUJ_14333"/>
<dbReference type="HOGENOM" id="CLU_022195_0_3_1"/>
<dbReference type="UniPathway" id="UPA00390"/>
<dbReference type="Proteomes" id="UP000016800">
    <property type="component" value="Chromosome 5"/>
</dbReference>
<dbReference type="GO" id="GO:0020037">
    <property type="term" value="F:heme binding"/>
    <property type="evidence" value="ECO:0007669"/>
    <property type="project" value="InterPro"/>
</dbReference>
<dbReference type="GO" id="GO:0005506">
    <property type="term" value="F:iron ion binding"/>
    <property type="evidence" value="ECO:0007669"/>
    <property type="project" value="InterPro"/>
</dbReference>
<dbReference type="GO" id="GO:0004497">
    <property type="term" value="F:monooxygenase activity"/>
    <property type="evidence" value="ECO:0007669"/>
    <property type="project" value="UniProtKB-KW"/>
</dbReference>
<dbReference type="GO" id="GO:0016705">
    <property type="term" value="F:oxidoreductase activity, acting on paired donors, with incorporation or reduction of molecular oxygen"/>
    <property type="evidence" value="ECO:0007669"/>
    <property type="project" value="InterPro"/>
</dbReference>
<dbReference type="GO" id="GO:0009686">
    <property type="term" value="P:gibberellin biosynthetic process"/>
    <property type="evidence" value="ECO:0007669"/>
    <property type="project" value="UniProtKB-UniPathway"/>
</dbReference>
<dbReference type="GO" id="GO:0019748">
    <property type="term" value="P:secondary metabolic process"/>
    <property type="evidence" value="ECO:0007669"/>
    <property type="project" value="UniProtKB-ARBA"/>
</dbReference>
<dbReference type="CDD" id="cd11041">
    <property type="entry name" value="CYP503A1-like"/>
    <property type="match status" value="1"/>
</dbReference>
<dbReference type="Gene3D" id="1.10.630.10">
    <property type="entry name" value="Cytochrome P450"/>
    <property type="match status" value="1"/>
</dbReference>
<dbReference type="InterPro" id="IPR001128">
    <property type="entry name" value="Cyt_P450"/>
</dbReference>
<dbReference type="InterPro" id="IPR017972">
    <property type="entry name" value="Cyt_P450_CS"/>
</dbReference>
<dbReference type="InterPro" id="IPR002403">
    <property type="entry name" value="Cyt_P450_E_grp-IV"/>
</dbReference>
<dbReference type="InterPro" id="IPR036396">
    <property type="entry name" value="Cyt_P450_sf"/>
</dbReference>
<dbReference type="PANTHER" id="PTHR46206">
    <property type="entry name" value="CYTOCHROME P450"/>
    <property type="match status" value="1"/>
</dbReference>
<dbReference type="PANTHER" id="PTHR46206:SF2">
    <property type="entry name" value="CYTOCHROME P450 MONOOXYGENASE AUSG-RELATED"/>
    <property type="match status" value="1"/>
</dbReference>
<dbReference type="Pfam" id="PF00067">
    <property type="entry name" value="p450"/>
    <property type="match status" value="1"/>
</dbReference>
<dbReference type="PRINTS" id="PR00465">
    <property type="entry name" value="EP450IV"/>
</dbReference>
<dbReference type="PRINTS" id="PR00385">
    <property type="entry name" value="P450"/>
</dbReference>
<dbReference type="SUPFAM" id="SSF48264">
    <property type="entry name" value="Cytochrome P450"/>
    <property type="match status" value="1"/>
</dbReference>
<dbReference type="PROSITE" id="PS00086">
    <property type="entry name" value="CYTOCHROME_P450"/>
    <property type="match status" value="1"/>
</dbReference>
<accession>S0E2U7</accession>
<protein>
    <recommendedName>
        <fullName evidence="13">Cytochrome P450 monooygenase 1</fullName>
        <shortName evidence="13">P450-1</shortName>
        <ecNumber evidence="4">1.-.-.-</ecNumber>
    </recommendedName>
    <alternativeName>
        <fullName evidence="12">Gibberellin cluster GA14 synthase</fullName>
    </alternativeName>
</protein>
<name>GA3_GIBF5</name>